<accession>B2VI65</accession>
<evidence type="ECO:0000255" key="1">
    <source>
        <dbReference type="HAMAP-Rule" id="MF_00172"/>
    </source>
</evidence>
<feature type="chain" id="PRO_1000097828" description="5-methyltetrahydropteroyltriglutamate--homocysteine methyltransferase">
    <location>
        <begin position="1"/>
        <end position="757"/>
    </location>
</feature>
<feature type="active site" description="Proton donor" evidence="1">
    <location>
        <position position="695"/>
    </location>
</feature>
<feature type="binding site" evidence="1">
    <location>
        <begin position="17"/>
        <end position="20"/>
    </location>
    <ligand>
        <name>5-methyltetrahydropteroyltri-L-glutamate</name>
        <dbReference type="ChEBI" id="CHEBI:58207"/>
    </ligand>
</feature>
<feature type="binding site" evidence="1">
    <location>
        <position position="117"/>
    </location>
    <ligand>
        <name>5-methyltetrahydropteroyltri-L-glutamate</name>
        <dbReference type="ChEBI" id="CHEBI:58207"/>
    </ligand>
</feature>
<feature type="binding site" evidence="1">
    <location>
        <begin position="432"/>
        <end position="434"/>
    </location>
    <ligand>
        <name>L-homocysteine</name>
        <dbReference type="ChEBI" id="CHEBI:58199"/>
    </ligand>
</feature>
<feature type="binding site" evidence="1">
    <location>
        <begin position="432"/>
        <end position="434"/>
    </location>
    <ligand>
        <name>L-methionine</name>
        <dbReference type="ChEBI" id="CHEBI:57844"/>
    </ligand>
</feature>
<feature type="binding site" evidence="1">
    <location>
        <position position="485"/>
    </location>
    <ligand>
        <name>L-homocysteine</name>
        <dbReference type="ChEBI" id="CHEBI:58199"/>
    </ligand>
</feature>
<feature type="binding site" evidence="1">
    <location>
        <position position="485"/>
    </location>
    <ligand>
        <name>L-methionine</name>
        <dbReference type="ChEBI" id="CHEBI:57844"/>
    </ligand>
</feature>
<feature type="binding site" evidence="1">
    <location>
        <begin position="516"/>
        <end position="517"/>
    </location>
    <ligand>
        <name>5-methyltetrahydropteroyltri-L-glutamate</name>
        <dbReference type="ChEBI" id="CHEBI:58207"/>
    </ligand>
</feature>
<feature type="binding site" evidence="1">
    <location>
        <position position="562"/>
    </location>
    <ligand>
        <name>5-methyltetrahydropteroyltri-L-glutamate</name>
        <dbReference type="ChEBI" id="CHEBI:58207"/>
    </ligand>
</feature>
<feature type="binding site" evidence="1">
    <location>
        <position position="600"/>
    </location>
    <ligand>
        <name>L-homocysteine</name>
        <dbReference type="ChEBI" id="CHEBI:58199"/>
    </ligand>
</feature>
<feature type="binding site" evidence="1">
    <location>
        <position position="600"/>
    </location>
    <ligand>
        <name>L-methionine</name>
        <dbReference type="ChEBI" id="CHEBI:57844"/>
    </ligand>
</feature>
<feature type="binding site" evidence="1">
    <location>
        <position position="606"/>
    </location>
    <ligand>
        <name>5-methyltetrahydropteroyltri-L-glutamate</name>
        <dbReference type="ChEBI" id="CHEBI:58207"/>
    </ligand>
</feature>
<feature type="binding site" evidence="1">
    <location>
        <position position="642"/>
    </location>
    <ligand>
        <name>Zn(2+)</name>
        <dbReference type="ChEBI" id="CHEBI:29105"/>
        <note>catalytic</note>
    </ligand>
</feature>
<feature type="binding site" evidence="1">
    <location>
        <position position="644"/>
    </location>
    <ligand>
        <name>Zn(2+)</name>
        <dbReference type="ChEBI" id="CHEBI:29105"/>
        <note>catalytic</note>
    </ligand>
</feature>
<feature type="binding site" evidence="1">
    <location>
        <position position="666"/>
    </location>
    <ligand>
        <name>Zn(2+)</name>
        <dbReference type="ChEBI" id="CHEBI:29105"/>
        <note>catalytic</note>
    </ligand>
</feature>
<feature type="binding site" evidence="1">
    <location>
        <position position="727"/>
    </location>
    <ligand>
        <name>Zn(2+)</name>
        <dbReference type="ChEBI" id="CHEBI:29105"/>
        <note>catalytic</note>
    </ligand>
</feature>
<proteinExistence type="inferred from homology"/>
<name>METE_ERWT9</name>
<organism>
    <name type="scientific">Erwinia tasmaniensis (strain DSM 17950 / CFBP 7177 / CIP 109463 / NCPPB 4357 / Et1/99)</name>
    <dbReference type="NCBI Taxonomy" id="465817"/>
    <lineage>
        <taxon>Bacteria</taxon>
        <taxon>Pseudomonadati</taxon>
        <taxon>Pseudomonadota</taxon>
        <taxon>Gammaproteobacteria</taxon>
        <taxon>Enterobacterales</taxon>
        <taxon>Erwiniaceae</taxon>
        <taxon>Erwinia</taxon>
    </lineage>
</organism>
<reference key="1">
    <citation type="journal article" date="2008" name="Environ. Microbiol.">
        <title>The genome of Erwinia tasmaniensis strain Et1/99, a non-pathogenic bacterium in the genus Erwinia.</title>
        <authorList>
            <person name="Kube M."/>
            <person name="Migdoll A.M."/>
            <person name="Mueller I."/>
            <person name="Kuhl H."/>
            <person name="Beck A."/>
            <person name="Reinhardt R."/>
            <person name="Geider K."/>
        </authorList>
    </citation>
    <scope>NUCLEOTIDE SEQUENCE [LARGE SCALE GENOMIC DNA]</scope>
    <source>
        <strain>DSM 17950 / CFBP 7177 / CIP 109463 / NCPPB 4357 / Et1/99</strain>
    </source>
</reference>
<comment type="function">
    <text evidence="1">Catalyzes the transfer of a methyl group from 5-methyltetrahydrofolate to homocysteine resulting in methionine formation.</text>
</comment>
<comment type="catalytic activity">
    <reaction evidence="1">
        <text>5-methyltetrahydropteroyltri-L-glutamate + L-homocysteine = tetrahydropteroyltri-L-glutamate + L-methionine</text>
        <dbReference type="Rhea" id="RHEA:21196"/>
        <dbReference type="ChEBI" id="CHEBI:57844"/>
        <dbReference type="ChEBI" id="CHEBI:58140"/>
        <dbReference type="ChEBI" id="CHEBI:58199"/>
        <dbReference type="ChEBI" id="CHEBI:58207"/>
        <dbReference type="EC" id="2.1.1.14"/>
    </reaction>
</comment>
<comment type="cofactor">
    <cofactor evidence="1">
        <name>Zn(2+)</name>
        <dbReference type="ChEBI" id="CHEBI:29105"/>
    </cofactor>
    <text evidence="1">Binds 1 zinc ion per subunit.</text>
</comment>
<comment type="pathway">
    <text evidence="1">Amino-acid biosynthesis; L-methionine biosynthesis via de novo pathway; L-methionine from L-homocysteine (MetE route): step 1/1.</text>
</comment>
<comment type="similarity">
    <text evidence="1">Belongs to the vitamin-B12 independent methionine synthase family.</text>
</comment>
<sequence>MTILNHTLGFPRVGLQRELKKAQESYWAGNSTQEELLTVGRELRARHWQQQKDAGVNLLPVGDFAWYDHVLTTSLMLGNVPARHQNKDGSVDLDTLFRLGRGRAPSGEPAAAAEMTKWFNTNYHYMVPEFVQGQQFKLTWTQLLDEVDEALALGHKVKPVLLGPVTYLWLGKVKGDPFDRLNLLQDILPVYRQVLAELAKRDIEWVQIDEPALALELPAEWLAAFKPAYDALQGQTKLLLTTYFDSIGQNLDTISALPVQGLHVDLVHGKDAITLLNSKVPADWLLSVGVINGRNVWRADLSSWFERLQPLVARRKRLWIGSSCSLLHSPIDLSVETRLDEEVKSWFAFALQKCSELALLSSALNNNDPASLEAWSAPIRSRKHSTRVHNAAVGQRLAAISPQDSLRKNRYPVRAKAQRQRFQLPAWPTTTIGSFPQTTEIRGLRLDFKQGRLDGTHYRTGIAEHIKQAIVEQERLGLDVLVHGEAERNDMVEYFGEHLDGFIFTQNGWVQSYGSRCVKPPVIIGDVSRPEAITVNWAKYAQSLTDKPVKGMLTGPVTILCWSFPREDVSRETIAKQIALALRDEVEDLEKAGIGIIQIDEPALREGLPLHQSDWGAYLEWAVDAFRLNAAVAQDDTQIHTHMCYCEFNDIMDSIAALDADVITIETSRSDMELLESFEEFEYPNEIGPGVYDIHSPNVPSVEWVEALLLKAAQRIPTERLWVNPDCGLKTRGWTETRQALANMVKAAQNLRQAQKA</sequence>
<protein>
    <recommendedName>
        <fullName evidence="1">5-methyltetrahydropteroyltriglutamate--homocysteine methyltransferase</fullName>
        <ecNumber evidence="1">2.1.1.14</ecNumber>
    </recommendedName>
    <alternativeName>
        <fullName evidence="1">Cobalamin-independent methionine synthase</fullName>
    </alternativeName>
    <alternativeName>
        <fullName evidence="1">Methionine synthase, vitamin-B12 independent isozyme</fullName>
    </alternativeName>
</protein>
<gene>
    <name evidence="1" type="primary">metE</name>
    <name type="ordered locus">ETA_02310</name>
</gene>
<keyword id="KW-0028">Amino-acid biosynthesis</keyword>
<keyword id="KW-0479">Metal-binding</keyword>
<keyword id="KW-0486">Methionine biosynthesis</keyword>
<keyword id="KW-0489">Methyltransferase</keyword>
<keyword id="KW-1185">Reference proteome</keyword>
<keyword id="KW-0677">Repeat</keyword>
<keyword id="KW-0808">Transferase</keyword>
<keyword id="KW-0862">Zinc</keyword>
<dbReference type="EC" id="2.1.1.14" evidence="1"/>
<dbReference type="EMBL" id="CU468135">
    <property type="protein sequence ID" value="CAO95277.1"/>
    <property type="molecule type" value="Genomic_DNA"/>
</dbReference>
<dbReference type="RefSeq" id="WP_012439997.1">
    <property type="nucleotide sequence ID" value="NC_010694.1"/>
</dbReference>
<dbReference type="SMR" id="B2VI65"/>
<dbReference type="STRING" id="465817.ETA_02310"/>
<dbReference type="KEGG" id="eta:ETA_02310"/>
<dbReference type="eggNOG" id="COG0620">
    <property type="taxonomic scope" value="Bacteria"/>
</dbReference>
<dbReference type="HOGENOM" id="CLU_013175_0_0_6"/>
<dbReference type="OrthoDB" id="244285at2"/>
<dbReference type="UniPathway" id="UPA00051">
    <property type="reaction ID" value="UER00082"/>
</dbReference>
<dbReference type="Proteomes" id="UP000001726">
    <property type="component" value="Chromosome"/>
</dbReference>
<dbReference type="GO" id="GO:0003871">
    <property type="term" value="F:5-methyltetrahydropteroyltriglutamate-homocysteine S-methyltransferase activity"/>
    <property type="evidence" value="ECO:0007669"/>
    <property type="project" value="UniProtKB-UniRule"/>
</dbReference>
<dbReference type="GO" id="GO:0008270">
    <property type="term" value="F:zinc ion binding"/>
    <property type="evidence" value="ECO:0007669"/>
    <property type="project" value="InterPro"/>
</dbReference>
<dbReference type="GO" id="GO:0009086">
    <property type="term" value="P:methionine biosynthetic process"/>
    <property type="evidence" value="ECO:0007669"/>
    <property type="project" value="UniProtKB-UniRule"/>
</dbReference>
<dbReference type="GO" id="GO:0032259">
    <property type="term" value="P:methylation"/>
    <property type="evidence" value="ECO:0007669"/>
    <property type="project" value="UniProtKB-KW"/>
</dbReference>
<dbReference type="CDD" id="cd03311">
    <property type="entry name" value="CIMS_C_terminal_like"/>
    <property type="match status" value="1"/>
</dbReference>
<dbReference type="CDD" id="cd03312">
    <property type="entry name" value="CIMS_N_terminal_like"/>
    <property type="match status" value="1"/>
</dbReference>
<dbReference type="FunFam" id="3.20.20.210:FF:000002">
    <property type="entry name" value="5-methyltetrahydropteroyltriglutamate--homocysteine methyltransferase"/>
    <property type="match status" value="1"/>
</dbReference>
<dbReference type="Gene3D" id="3.20.20.210">
    <property type="match status" value="2"/>
</dbReference>
<dbReference type="HAMAP" id="MF_00172">
    <property type="entry name" value="Meth_synth"/>
    <property type="match status" value="1"/>
</dbReference>
<dbReference type="InterPro" id="IPR013215">
    <property type="entry name" value="Cbl-indep_Met_Synth_N"/>
</dbReference>
<dbReference type="InterPro" id="IPR006276">
    <property type="entry name" value="Cobalamin-indep_Met_synthase"/>
</dbReference>
<dbReference type="InterPro" id="IPR002629">
    <property type="entry name" value="Met_Synth_C/arc"/>
</dbReference>
<dbReference type="InterPro" id="IPR038071">
    <property type="entry name" value="UROD/MetE-like_sf"/>
</dbReference>
<dbReference type="NCBIfam" id="TIGR01371">
    <property type="entry name" value="met_syn_B12ind"/>
    <property type="match status" value="1"/>
</dbReference>
<dbReference type="NCBIfam" id="NF003556">
    <property type="entry name" value="PRK05222.1"/>
    <property type="match status" value="1"/>
</dbReference>
<dbReference type="PANTHER" id="PTHR30519">
    <property type="entry name" value="5-METHYLTETRAHYDROPTEROYLTRIGLUTAMATE--HOMOCYSTEINE METHYLTRANSFERASE"/>
    <property type="match status" value="1"/>
</dbReference>
<dbReference type="Pfam" id="PF08267">
    <property type="entry name" value="Meth_synt_1"/>
    <property type="match status" value="1"/>
</dbReference>
<dbReference type="Pfam" id="PF01717">
    <property type="entry name" value="Meth_synt_2"/>
    <property type="match status" value="1"/>
</dbReference>
<dbReference type="PIRSF" id="PIRSF000382">
    <property type="entry name" value="MeTrfase_B12_ind"/>
    <property type="match status" value="1"/>
</dbReference>
<dbReference type="SUPFAM" id="SSF51726">
    <property type="entry name" value="UROD/MetE-like"/>
    <property type="match status" value="2"/>
</dbReference>